<proteinExistence type="inferred from homology"/>
<keyword id="KW-0004">4Fe-4S</keyword>
<keyword id="KW-0342">GTP-binding</keyword>
<keyword id="KW-0408">Iron</keyword>
<keyword id="KW-0411">Iron-sulfur</keyword>
<keyword id="KW-0456">Lyase</keyword>
<keyword id="KW-0479">Metal-binding</keyword>
<keyword id="KW-0501">Molybdenum cofactor biosynthesis</keyword>
<keyword id="KW-0547">Nucleotide-binding</keyword>
<keyword id="KW-1185">Reference proteome</keyword>
<keyword id="KW-0949">S-adenosyl-L-methionine</keyword>
<feature type="chain" id="PRO_0000153017" description="Probable GTP 3',8-cyclase">
    <location>
        <begin position="1"/>
        <end position="298"/>
    </location>
</feature>
<feature type="domain" description="Radical SAM core" evidence="2">
    <location>
        <begin position="4"/>
        <end position="230"/>
    </location>
</feature>
<feature type="binding site" evidence="1">
    <location>
        <position position="13"/>
    </location>
    <ligand>
        <name>GTP</name>
        <dbReference type="ChEBI" id="CHEBI:37565"/>
    </ligand>
</feature>
<feature type="binding site" evidence="1">
    <location>
        <position position="20"/>
    </location>
    <ligand>
        <name>[4Fe-4S] cluster</name>
        <dbReference type="ChEBI" id="CHEBI:49883"/>
        <label>1</label>
        <note>4Fe-4S-S-AdoMet</note>
    </ligand>
</feature>
<feature type="binding site" evidence="1">
    <location>
        <position position="24"/>
    </location>
    <ligand>
        <name>[4Fe-4S] cluster</name>
        <dbReference type="ChEBI" id="CHEBI:49883"/>
        <label>1</label>
        <note>4Fe-4S-S-AdoMet</note>
    </ligand>
</feature>
<feature type="binding site" evidence="1">
    <location>
        <position position="26"/>
    </location>
    <ligand>
        <name>S-adenosyl-L-methionine</name>
        <dbReference type="ChEBI" id="CHEBI:59789"/>
    </ligand>
</feature>
<feature type="binding site" evidence="1">
    <location>
        <position position="27"/>
    </location>
    <ligand>
        <name>[4Fe-4S] cluster</name>
        <dbReference type="ChEBI" id="CHEBI:49883"/>
        <label>1</label>
        <note>4Fe-4S-S-AdoMet</note>
    </ligand>
</feature>
<feature type="binding site" evidence="1">
    <location>
        <position position="61"/>
    </location>
    <ligand>
        <name>GTP</name>
        <dbReference type="ChEBI" id="CHEBI:37565"/>
    </ligand>
</feature>
<feature type="binding site" evidence="1">
    <location>
        <position position="65"/>
    </location>
    <ligand>
        <name>S-adenosyl-L-methionine</name>
        <dbReference type="ChEBI" id="CHEBI:59789"/>
    </ligand>
</feature>
<feature type="binding site" evidence="1">
    <location>
        <position position="91"/>
    </location>
    <ligand>
        <name>GTP</name>
        <dbReference type="ChEBI" id="CHEBI:37565"/>
    </ligand>
</feature>
<feature type="binding site" evidence="1">
    <location>
        <position position="115"/>
    </location>
    <ligand>
        <name>S-adenosyl-L-methionine</name>
        <dbReference type="ChEBI" id="CHEBI:59789"/>
    </ligand>
</feature>
<feature type="binding site" evidence="1">
    <location>
        <position position="152"/>
    </location>
    <ligand>
        <name>GTP</name>
        <dbReference type="ChEBI" id="CHEBI:37565"/>
    </ligand>
</feature>
<feature type="binding site" evidence="1">
    <location>
        <position position="243"/>
    </location>
    <ligand>
        <name>[4Fe-4S] cluster</name>
        <dbReference type="ChEBI" id="CHEBI:49883"/>
        <label>2</label>
        <note>4Fe-4S-substrate</note>
    </ligand>
</feature>
<feature type="binding site" evidence="1">
    <location>
        <position position="246"/>
    </location>
    <ligand>
        <name>[4Fe-4S] cluster</name>
        <dbReference type="ChEBI" id="CHEBI:49883"/>
        <label>2</label>
        <note>4Fe-4S-substrate</note>
    </ligand>
</feature>
<feature type="binding site" evidence="1">
    <location>
        <begin position="248"/>
        <end position="250"/>
    </location>
    <ligand>
        <name>GTP</name>
        <dbReference type="ChEBI" id="CHEBI:37565"/>
    </ligand>
</feature>
<feature type="binding site" evidence="1">
    <location>
        <position position="260"/>
    </location>
    <ligand>
        <name>[4Fe-4S] cluster</name>
        <dbReference type="ChEBI" id="CHEBI:49883"/>
        <label>2</label>
        <note>4Fe-4S-substrate</note>
    </ligand>
</feature>
<sequence length="298" mass="34652">MKDKFGREIRSLRISITNKCNLQCFYCHREGHDSNNDRYMTPEEIGIIAKTSTKFGVKKIKISGGEPLLRKDVCEIIENIKDERIKDISLTTNGILLENLAEKLKDAGLNRVNVSLDTLNPELYKKITKFGDVERVINGIKKAIDVSLTPLKVNFLAMSINIKDLPDIMEFCRDIGAILQIIEFIPLKEELKGYYYNISPIENEIKEKADKVITRNFMQNRKKYIVDGLEIEFVRPMDNSEFCMHCTRIRLTYDGYLKPCLLRDDNLVDVLTPLRKGENLEPYFIECINRREPYFKIK</sequence>
<organism>
    <name type="scientific">Methanocaldococcus jannaschii (strain ATCC 43067 / DSM 2661 / JAL-1 / JCM 10045 / NBRC 100440)</name>
    <name type="common">Methanococcus jannaschii</name>
    <dbReference type="NCBI Taxonomy" id="243232"/>
    <lineage>
        <taxon>Archaea</taxon>
        <taxon>Methanobacteriati</taxon>
        <taxon>Methanobacteriota</taxon>
        <taxon>Methanomada group</taxon>
        <taxon>Methanococci</taxon>
        <taxon>Methanococcales</taxon>
        <taxon>Methanocaldococcaceae</taxon>
        <taxon>Methanocaldococcus</taxon>
    </lineage>
</organism>
<protein>
    <recommendedName>
        <fullName evidence="1">Probable GTP 3',8-cyclase</fullName>
        <ecNumber evidence="1">4.1.99.22</ecNumber>
    </recommendedName>
    <alternativeName>
        <fullName evidence="1">Molybdenum cofactor biosynthesis protein A</fullName>
    </alternativeName>
</protein>
<accession>Q58234</accession>
<name>MOAA_METJA</name>
<evidence type="ECO:0000255" key="1">
    <source>
        <dbReference type="HAMAP-Rule" id="MF_01225"/>
    </source>
</evidence>
<evidence type="ECO:0000255" key="2">
    <source>
        <dbReference type="PROSITE-ProRule" id="PRU01266"/>
    </source>
</evidence>
<gene>
    <name evidence="1" type="primary">moaA</name>
    <name type="ordered locus">MJ0824</name>
</gene>
<dbReference type="EC" id="4.1.99.22" evidence="1"/>
<dbReference type="EMBL" id="L77117">
    <property type="protein sequence ID" value="AAB98823.1"/>
    <property type="molecule type" value="Genomic_DNA"/>
</dbReference>
<dbReference type="PIR" id="H64402">
    <property type="entry name" value="H64402"/>
</dbReference>
<dbReference type="RefSeq" id="WP_010870335.1">
    <property type="nucleotide sequence ID" value="NC_000909.1"/>
</dbReference>
<dbReference type="SMR" id="Q58234"/>
<dbReference type="FunCoup" id="Q58234">
    <property type="interactions" value="154"/>
</dbReference>
<dbReference type="STRING" id="243232.MJ_0824"/>
<dbReference type="PaxDb" id="243232-MJ_0824"/>
<dbReference type="DNASU" id="1451707"/>
<dbReference type="EnsemblBacteria" id="AAB98823">
    <property type="protein sequence ID" value="AAB98823"/>
    <property type="gene ID" value="MJ_0824"/>
</dbReference>
<dbReference type="GeneID" id="1451707"/>
<dbReference type="KEGG" id="mja:MJ_0824"/>
<dbReference type="eggNOG" id="arCOG00930">
    <property type="taxonomic scope" value="Archaea"/>
</dbReference>
<dbReference type="HOGENOM" id="CLU_009273_0_1_2"/>
<dbReference type="InParanoid" id="Q58234"/>
<dbReference type="OrthoDB" id="6925at2157"/>
<dbReference type="PhylomeDB" id="Q58234"/>
<dbReference type="UniPathway" id="UPA00344"/>
<dbReference type="Proteomes" id="UP000000805">
    <property type="component" value="Chromosome"/>
</dbReference>
<dbReference type="GO" id="GO:0051539">
    <property type="term" value="F:4 iron, 4 sulfur cluster binding"/>
    <property type="evidence" value="ECO:0007669"/>
    <property type="project" value="UniProtKB-UniRule"/>
</dbReference>
<dbReference type="GO" id="GO:0061799">
    <property type="term" value="F:cyclic pyranopterin monophosphate synthase activity"/>
    <property type="evidence" value="ECO:0000318"/>
    <property type="project" value="GO_Central"/>
</dbReference>
<dbReference type="GO" id="GO:0061798">
    <property type="term" value="F:GTP 3',8'-cyclase activity"/>
    <property type="evidence" value="ECO:0000318"/>
    <property type="project" value="GO_Central"/>
</dbReference>
<dbReference type="GO" id="GO:0005525">
    <property type="term" value="F:GTP binding"/>
    <property type="evidence" value="ECO:0007669"/>
    <property type="project" value="UniProtKB-UniRule"/>
</dbReference>
<dbReference type="GO" id="GO:0046872">
    <property type="term" value="F:metal ion binding"/>
    <property type="evidence" value="ECO:0007669"/>
    <property type="project" value="UniProtKB-KW"/>
</dbReference>
<dbReference type="GO" id="GO:1904047">
    <property type="term" value="F:S-adenosyl-L-methionine binding"/>
    <property type="evidence" value="ECO:0007669"/>
    <property type="project" value="UniProtKB-UniRule"/>
</dbReference>
<dbReference type="GO" id="GO:0006777">
    <property type="term" value="P:Mo-molybdopterin cofactor biosynthetic process"/>
    <property type="evidence" value="ECO:0000318"/>
    <property type="project" value="GO_Central"/>
</dbReference>
<dbReference type="CDD" id="cd01335">
    <property type="entry name" value="Radical_SAM"/>
    <property type="match status" value="1"/>
</dbReference>
<dbReference type="Gene3D" id="3.20.20.70">
    <property type="entry name" value="Aldolase class I"/>
    <property type="match status" value="1"/>
</dbReference>
<dbReference type="HAMAP" id="MF_01225_A">
    <property type="entry name" value="MoaA_A"/>
    <property type="match status" value="1"/>
</dbReference>
<dbReference type="InterPro" id="IPR013785">
    <property type="entry name" value="Aldolase_TIM"/>
</dbReference>
<dbReference type="InterPro" id="IPR018247">
    <property type="entry name" value="EF_Hand_1_Ca_BS"/>
</dbReference>
<dbReference type="InterPro" id="IPR006638">
    <property type="entry name" value="Elp3/MiaA/NifB-like_rSAM"/>
</dbReference>
<dbReference type="InterPro" id="IPR013485">
    <property type="entry name" value="MoaA_arc"/>
</dbReference>
<dbReference type="InterPro" id="IPR000385">
    <property type="entry name" value="MoaA_NifB_PqqE_Fe-S-bd_CS"/>
</dbReference>
<dbReference type="InterPro" id="IPR010505">
    <property type="entry name" value="MoaA_twitch"/>
</dbReference>
<dbReference type="InterPro" id="IPR050105">
    <property type="entry name" value="MoCo_biosynth_MoaA/MoaC"/>
</dbReference>
<dbReference type="InterPro" id="IPR007197">
    <property type="entry name" value="rSAM"/>
</dbReference>
<dbReference type="NCBIfam" id="TIGR02668">
    <property type="entry name" value="moaA_archaeal"/>
    <property type="match status" value="1"/>
</dbReference>
<dbReference type="NCBIfam" id="NF001199">
    <property type="entry name" value="PRK00164.2-1"/>
    <property type="match status" value="1"/>
</dbReference>
<dbReference type="PANTHER" id="PTHR22960:SF0">
    <property type="entry name" value="MOLYBDENUM COFACTOR BIOSYNTHESIS PROTEIN 1"/>
    <property type="match status" value="1"/>
</dbReference>
<dbReference type="PANTHER" id="PTHR22960">
    <property type="entry name" value="MOLYBDOPTERIN COFACTOR SYNTHESIS PROTEIN A"/>
    <property type="match status" value="1"/>
</dbReference>
<dbReference type="Pfam" id="PF13353">
    <property type="entry name" value="Fer4_12"/>
    <property type="match status" value="1"/>
</dbReference>
<dbReference type="Pfam" id="PF06463">
    <property type="entry name" value="Mob_synth_C"/>
    <property type="match status" value="1"/>
</dbReference>
<dbReference type="Pfam" id="PF04055">
    <property type="entry name" value="Radical_SAM"/>
    <property type="match status" value="1"/>
</dbReference>
<dbReference type="SFLD" id="SFLDG01383">
    <property type="entry name" value="cyclic_pyranopterin_phosphate"/>
    <property type="match status" value="1"/>
</dbReference>
<dbReference type="SFLD" id="SFLDG01216">
    <property type="entry name" value="thioether_bond_formation_requi"/>
    <property type="match status" value="1"/>
</dbReference>
<dbReference type="SMART" id="SM00729">
    <property type="entry name" value="Elp3"/>
    <property type="match status" value="1"/>
</dbReference>
<dbReference type="SUPFAM" id="SSF102114">
    <property type="entry name" value="Radical SAM enzymes"/>
    <property type="match status" value="1"/>
</dbReference>
<dbReference type="PROSITE" id="PS01305">
    <property type="entry name" value="MOAA_NIFB_PQQE"/>
    <property type="match status" value="1"/>
</dbReference>
<dbReference type="PROSITE" id="PS51918">
    <property type="entry name" value="RADICAL_SAM"/>
    <property type="match status" value="1"/>
</dbReference>
<comment type="function">
    <text evidence="1">Catalyzes the cyclization of GTP to (8S)-3',8-cyclo-7,8-dihydroguanosine 5'-triphosphate.</text>
</comment>
<comment type="catalytic activity">
    <reaction evidence="1">
        <text>GTP + AH2 + S-adenosyl-L-methionine = (8S)-3',8-cyclo-7,8-dihydroguanosine 5'-triphosphate + 5'-deoxyadenosine + L-methionine + A + H(+)</text>
        <dbReference type="Rhea" id="RHEA:49576"/>
        <dbReference type="ChEBI" id="CHEBI:13193"/>
        <dbReference type="ChEBI" id="CHEBI:15378"/>
        <dbReference type="ChEBI" id="CHEBI:17319"/>
        <dbReference type="ChEBI" id="CHEBI:17499"/>
        <dbReference type="ChEBI" id="CHEBI:37565"/>
        <dbReference type="ChEBI" id="CHEBI:57844"/>
        <dbReference type="ChEBI" id="CHEBI:59789"/>
        <dbReference type="ChEBI" id="CHEBI:131766"/>
        <dbReference type="EC" id="4.1.99.22"/>
    </reaction>
</comment>
<comment type="cofactor">
    <cofactor evidence="1">
        <name>[4Fe-4S] cluster</name>
        <dbReference type="ChEBI" id="CHEBI:49883"/>
    </cofactor>
    <text evidence="1">Binds 2 [4Fe-4S] clusters. Binds 1 [4Fe-4S] cluster coordinated with 3 cysteines and an exchangeable S-adenosyl-L-methionine and 1 [4Fe-4S] cluster coordinated with 3 cysteines and the GTP-derived substrate.</text>
</comment>
<comment type="pathway">
    <text evidence="1">Cofactor biosynthesis; molybdopterin biosynthesis.</text>
</comment>
<comment type="similarity">
    <text evidence="1">Belongs to the radical SAM superfamily. MoaA family.</text>
</comment>
<reference key="1">
    <citation type="journal article" date="1996" name="Science">
        <title>Complete genome sequence of the methanogenic archaeon, Methanococcus jannaschii.</title>
        <authorList>
            <person name="Bult C.J."/>
            <person name="White O."/>
            <person name="Olsen G.J."/>
            <person name="Zhou L."/>
            <person name="Fleischmann R.D."/>
            <person name="Sutton G.G."/>
            <person name="Blake J.A."/>
            <person name="FitzGerald L.M."/>
            <person name="Clayton R.A."/>
            <person name="Gocayne J.D."/>
            <person name="Kerlavage A.R."/>
            <person name="Dougherty B.A."/>
            <person name="Tomb J.-F."/>
            <person name="Adams M.D."/>
            <person name="Reich C.I."/>
            <person name="Overbeek R."/>
            <person name="Kirkness E.F."/>
            <person name="Weinstock K.G."/>
            <person name="Merrick J.M."/>
            <person name="Glodek A."/>
            <person name="Scott J.L."/>
            <person name="Geoghagen N.S.M."/>
            <person name="Weidman J.F."/>
            <person name="Fuhrmann J.L."/>
            <person name="Nguyen D."/>
            <person name="Utterback T.R."/>
            <person name="Kelley J.M."/>
            <person name="Peterson J.D."/>
            <person name="Sadow P.W."/>
            <person name="Hanna M.C."/>
            <person name="Cotton M.D."/>
            <person name="Roberts K.M."/>
            <person name="Hurst M.A."/>
            <person name="Kaine B.P."/>
            <person name="Borodovsky M."/>
            <person name="Klenk H.-P."/>
            <person name="Fraser C.M."/>
            <person name="Smith H.O."/>
            <person name="Woese C.R."/>
            <person name="Venter J.C."/>
        </authorList>
    </citation>
    <scope>NUCLEOTIDE SEQUENCE [LARGE SCALE GENOMIC DNA]</scope>
    <source>
        <strain>ATCC 43067 / DSM 2661 / JAL-1 / JCM 10045 / NBRC 100440</strain>
    </source>
</reference>